<name>CCA_YERPS</name>
<feature type="chain" id="PRO_0000139012" description="Multifunctional CCA protein">
    <location>
        <begin position="1"/>
        <end position="412"/>
    </location>
</feature>
<feature type="domain" description="HD" evidence="1">
    <location>
        <begin position="228"/>
        <end position="329"/>
    </location>
</feature>
<feature type="binding site" evidence="1">
    <location>
        <position position="8"/>
    </location>
    <ligand>
        <name>ATP</name>
        <dbReference type="ChEBI" id="CHEBI:30616"/>
    </ligand>
</feature>
<feature type="binding site" evidence="1">
    <location>
        <position position="8"/>
    </location>
    <ligand>
        <name>CTP</name>
        <dbReference type="ChEBI" id="CHEBI:37563"/>
    </ligand>
</feature>
<feature type="binding site" evidence="1">
    <location>
        <position position="11"/>
    </location>
    <ligand>
        <name>ATP</name>
        <dbReference type="ChEBI" id="CHEBI:30616"/>
    </ligand>
</feature>
<feature type="binding site" evidence="1">
    <location>
        <position position="11"/>
    </location>
    <ligand>
        <name>CTP</name>
        <dbReference type="ChEBI" id="CHEBI:37563"/>
    </ligand>
</feature>
<feature type="binding site" evidence="1">
    <location>
        <position position="21"/>
    </location>
    <ligand>
        <name>Mg(2+)</name>
        <dbReference type="ChEBI" id="CHEBI:18420"/>
    </ligand>
</feature>
<feature type="binding site" evidence="1">
    <location>
        <position position="23"/>
    </location>
    <ligand>
        <name>Mg(2+)</name>
        <dbReference type="ChEBI" id="CHEBI:18420"/>
    </ligand>
</feature>
<feature type="binding site" evidence="1">
    <location>
        <position position="91"/>
    </location>
    <ligand>
        <name>ATP</name>
        <dbReference type="ChEBI" id="CHEBI:30616"/>
    </ligand>
</feature>
<feature type="binding site" evidence="1">
    <location>
        <position position="91"/>
    </location>
    <ligand>
        <name>CTP</name>
        <dbReference type="ChEBI" id="CHEBI:37563"/>
    </ligand>
</feature>
<feature type="binding site" evidence="1">
    <location>
        <position position="137"/>
    </location>
    <ligand>
        <name>ATP</name>
        <dbReference type="ChEBI" id="CHEBI:30616"/>
    </ligand>
</feature>
<feature type="binding site" evidence="1">
    <location>
        <position position="137"/>
    </location>
    <ligand>
        <name>CTP</name>
        <dbReference type="ChEBI" id="CHEBI:37563"/>
    </ligand>
</feature>
<feature type="binding site" evidence="1">
    <location>
        <position position="140"/>
    </location>
    <ligand>
        <name>ATP</name>
        <dbReference type="ChEBI" id="CHEBI:30616"/>
    </ligand>
</feature>
<feature type="binding site" evidence="1">
    <location>
        <position position="140"/>
    </location>
    <ligand>
        <name>CTP</name>
        <dbReference type="ChEBI" id="CHEBI:37563"/>
    </ligand>
</feature>
<organism>
    <name type="scientific">Yersinia pseudotuberculosis serotype I (strain IP32953)</name>
    <dbReference type="NCBI Taxonomy" id="273123"/>
    <lineage>
        <taxon>Bacteria</taxon>
        <taxon>Pseudomonadati</taxon>
        <taxon>Pseudomonadota</taxon>
        <taxon>Gammaproteobacteria</taxon>
        <taxon>Enterobacterales</taxon>
        <taxon>Yersiniaceae</taxon>
        <taxon>Yersinia</taxon>
    </lineage>
</organism>
<dbReference type="EC" id="2.7.7.72" evidence="1"/>
<dbReference type="EC" id="3.1.3.-" evidence="1"/>
<dbReference type="EC" id="3.1.4.-" evidence="1"/>
<dbReference type="EMBL" id="BX936398">
    <property type="protein sequence ID" value="CAH22649.1"/>
    <property type="molecule type" value="Genomic_DNA"/>
</dbReference>
<dbReference type="RefSeq" id="WP_011193101.1">
    <property type="nucleotide sequence ID" value="NC_006155.1"/>
</dbReference>
<dbReference type="SMR" id="Q665U9"/>
<dbReference type="GeneID" id="49784604"/>
<dbReference type="KEGG" id="ypo:BZ17_3197"/>
<dbReference type="KEGG" id="yps:YPTB3411"/>
<dbReference type="PATRIC" id="fig|273123.14.peg.3348"/>
<dbReference type="Proteomes" id="UP000001011">
    <property type="component" value="Chromosome"/>
</dbReference>
<dbReference type="GO" id="GO:0005524">
    <property type="term" value="F:ATP binding"/>
    <property type="evidence" value="ECO:0007669"/>
    <property type="project" value="UniProtKB-UniRule"/>
</dbReference>
<dbReference type="GO" id="GO:0004810">
    <property type="term" value="F:CCA tRNA nucleotidyltransferase activity"/>
    <property type="evidence" value="ECO:0007669"/>
    <property type="project" value="UniProtKB-UniRule"/>
</dbReference>
<dbReference type="GO" id="GO:0004112">
    <property type="term" value="F:cyclic-nucleotide phosphodiesterase activity"/>
    <property type="evidence" value="ECO:0007669"/>
    <property type="project" value="UniProtKB-UniRule"/>
</dbReference>
<dbReference type="GO" id="GO:0000287">
    <property type="term" value="F:magnesium ion binding"/>
    <property type="evidence" value="ECO:0007669"/>
    <property type="project" value="UniProtKB-UniRule"/>
</dbReference>
<dbReference type="GO" id="GO:0016791">
    <property type="term" value="F:phosphatase activity"/>
    <property type="evidence" value="ECO:0007669"/>
    <property type="project" value="UniProtKB-UniRule"/>
</dbReference>
<dbReference type="GO" id="GO:0000049">
    <property type="term" value="F:tRNA binding"/>
    <property type="evidence" value="ECO:0007669"/>
    <property type="project" value="UniProtKB-UniRule"/>
</dbReference>
<dbReference type="GO" id="GO:0042245">
    <property type="term" value="P:RNA repair"/>
    <property type="evidence" value="ECO:0007669"/>
    <property type="project" value="UniProtKB-KW"/>
</dbReference>
<dbReference type="GO" id="GO:0001680">
    <property type="term" value="P:tRNA 3'-terminal CCA addition"/>
    <property type="evidence" value="ECO:0007669"/>
    <property type="project" value="UniProtKB-UniRule"/>
</dbReference>
<dbReference type="CDD" id="cd00077">
    <property type="entry name" value="HDc"/>
    <property type="match status" value="1"/>
</dbReference>
<dbReference type="CDD" id="cd05398">
    <property type="entry name" value="NT_ClassII-CCAase"/>
    <property type="match status" value="1"/>
</dbReference>
<dbReference type="FunFam" id="1.10.3090.10:FF:000001">
    <property type="entry name" value="Multifunctional CCA protein"/>
    <property type="match status" value="1"/>
</dbReference>
<dbReference type="FunFam" id="3.30.460.10:FF:000016">
    <property type="entry name" value="Multifunctional CCA protein"/>
    <property type="match status" value="1"/>
</dbReference>
<dbReference type="Gene3D" id="3.30.460.10">
    <property type="entry name" value="Beta Polymerase, domain 2"/>
    <property type="match status" value="1"/>
</dbReference>
<dbReference type="Gene3D" id="1.10.3090.10">
    <property type="entry name" value="cca-adding enzyme, domain 2"/>
    <property type="match status" value="1"/>
</dbReference>
<dbReference type="HAMAP" id="MF_01261">
    <property type="entry name" value="CCA_bact_type1"/>
    <property type="match status" value="1"/>
</dbReference>
<dbReference type="HAMAP" id="MF_01262">
    <property type="entry name" value="CCA_bact_type2"/>
    <property type="match status" value="1"/>
</dbReference>
<dbReference type="InterPro" id="IPR012006">
    <property type="entry name" value="CCA_bact"/>
</dbReference>
<dbReference type="InterPro" id="IPR003607">
    <property type="entry name" value="HD/PDEase_dom"/>
</dbReference>
<dbReference type="InterPro" id="IPR006674">
    <property type="entry name" value="HD_domain"/>
</dbReference>
<dbReference type="InterPro" id="IPR043519">
    <property type="entry name" value="NT_sf"/>
</dbReference>
<dbReference type="InterPro" id="IPR002646">
    <property type="entry name" value="PolA_pol_head_dom"/>
</dbReference>
<dbReference type="InterPro" id="IPR032828">
    <property type="entry name" value="PolyA_RNA-bd"/>
</dbReference>
<dbReference type="InterPro" id="IPR050124">
    <property type="entry name" value="tRNA_CCA-adding_enzyme"/>
</dbReference>
<dbReference type="NCBIfam" id="NF008137">
    <property type="entry name" value="PRK10885.1"/>
    <property type="match status" value="1"/>
</dbReference>
<dbReference type="PANTHER" id="PTHR47545">
    <property type="entry name" value="MULTIFUNCTIONAL CCA PROTEIN"/>
    <property type="match status" value="1"/>
</dbReference>
<dbReference type="PANTHER" id="PTHR47545:SF1">
    <property type="entry name" value="MULTIFUNCTIONAL CCA PROTEIN"/>
    <property type="match status" value="1"/>
</dbReference>
<dbReference type="Pfam" id="PF01966">
    <property type="entry name" value="HD"/>
    <property type="match status" value="1"/>
</dbReference>
<dbReference type="Pfam" id="PF01743">
    <property type="entry name" value="PolyA_pol"/>
    <property type="match status" value="1"/>
</dbReference>
<dbReference type="Pfam" id="PF12627">
    <property type="entry name" value="PolyA_pol_RNAbd"/>
    <property type="match status" value="1"/>
</dbReference>
<dbReference type="PIRSF" id="PIRSF000813">
    <property type="entry name" value="CCA_bact"/>
    <property type="match status" value="1"/>
</dbReference>
<dbReference type="SMART" id="SM00471">
    <property type="entry name" value="HDc"/>
    <property type="match status" value="1"/>
</dbReference>
<dbReference type="SUPFAM" id="SSF81301">
    <property type="entry name" value="Nucleotidyltransferase"/>
    <property type="match status" value="1"/>
</dbReference>
<dbReference type="SUPFAM" id="SSF81891">
    <property type="entry name" value="Poly A polymerase C-terminal region-like"/>
    <property type="match status" value="1"/>
</dbReference>
<dbReference type="PROSITE" id="PS51831">
    <property type="entry name" value="HD"/>
    <property type="match status" value="1"/>
</dbReference>
<comment type="function">
    <text evidence="1">Catalyzes the addition and repair of the essential 3'-terminal CCA sequence in tRNAs without using a nucleic acid template. Adds these three nucleotides in the order of C, C, and A to the tRNA nucleotide-73, using CTP and ATP as substrates and producing inorganic pyrophosphate. tRNA 3'-terminal CCA addition is required both for tRNA processing and repair. Also involved in tRNA surveillance by mediating tandem CCA addition to generate a CCACCA at the 3' terminus of unstable tRNAs. While stable tRNAs receive only 3'-terminal CCA, unstable tRNAs are marked with CCACCA and rapidly degraded.</text>
</comment>
<comment type="catalytic activity">
    <reaction evidence="1">
        <text>a tRNA precursor + 2 CTP + ATP = a tRNA with a 3' CCA end + 3 diphosphate</text>
        <dbReference type="Rhea" id="RHEA:14433"/>
        <dbReference type="Rhea" id="RHEA-COMP:10465"/>
        <dbReference type="Rhea" id="RHEA-COMP:10468"/>
        <dbReference type="ChEBI" id="CHEBI:30616"/>
        <dbReference type="ChEBI" id="CHEBI:33019"/>
        <dbReference type="ChEBI" id="CHEBI:37563"/>
        <dbReference type="ChEBI" id="CHEBI:74896"/>
        <dbReference type="ChEBI" id="CHEBI:83071"/>
        <dbReference type="EC" id="2.7.7.72"/>
    </reaction>
</comment>
<comment type="catalytic activity">
    <reaction evidence="1">
        <text>a tRNA with a 3' CCA end + 2 CTP + ATP = a tRNA with a 3' CCACCA end + 3 diphosphate</text>
        <dbReference type="Rhea" id="RHEA:76235"/>
        <dbReference type="Rhea" id="RHEA-COMP:10468"/>
        <dbReference type="Rhea" id="RHEA-COMP:18655"/>
        <dbReference type="ChEBI" id="CHEBI:30616"/>
        <dbReference type="ChEBI" id="CHEBI:33019"/>
        <dbReference type="ChEBI" id="CHEBI:37563"/>
        <dbReference type="ChEBI" id="CHEBI:83071"/>
        <dbReference type="ChEBI" id="CHEBI:195187"/>
    </reaction>
    <physiologicalReaction direction="left-to-right" evidence="1">
        <dbReference type="Rhea" id="RHEA:76236"/>
    </physiologicalReaction>
</comment>
<comment type="cofactor">
    <cofactor evidence="1">
        <name>Mg(2+)</name>
        <dbReference type="ChEBI" id="CHEBI:18420"/>
    </cofactor>
    <text evidence="1">Magnesium is required for nucleotidyltransferase activity.</text>
</comment>
<comment type="cofactor">
    <cofactor evidence="1">
        <name>Ni(2+)</name>
        <dbReference type="ChEBI" id="CHEBI:49786"/>
    </cofactor>
    <text evidence="1">Nickel for phosphatase activity.</text>
</comment>
<comment type="subunit">
    <text evidence="1">Monomer. Can also form homodimers and oligomers.</text>
</comment>
<comment type="domain">
    <text evidence="1">Comprises two domains: an N-terminal domain containing the nucleotidyltransferase activity and a C-terminal HD domain associated with both phosphodiesterase and phosphatase activities.</text>
</comment>
<comment type="miscellaneous">
    <text evidence="1">A single active site specifically recognizes both ATP and CTP and is responsible for their addition.</text>
</comment>
<comment type="similarity">
    <text evidence="1">Belongs to the tRNA nucleotidyltransferase/poly(A) polymerase family. Bacterial CCA-adding enzyme type 1 subfamily.</text>
</comment>
<evidence type="ECO:0000255" key="1">
    <source>
        <dbReference type="HAMAP-Rule" id="MF_01261"/>
    </source>
</evidence>
<accession>Q665U9</accession>
<sequence length="412" mass="46341">MNIYLVGGAVRDSLLNLPVTEQDWVVVGATPEQLLKLGYQQVGKDFPVFLHPVSHEEYALARTERKSGQGYTGFTCYAAPDVTLEDDLLRRDLTVNAIARSADGEFIDPYHGKQDLENRVLRHVSDAFGEDPLRVLRVARFAARFAYLGFTIAPETMSLMSNMAQSGELSALTPERVWKETEKALKTQSPHVYFQVLRDCGALAVLFPEIERLFGVPAPEKWHPEIDTGIHTLMTLAIAAQLSPEVDIRFAALCHDLGKGLTPKEHWPHHHGHGPAGVKLVEQLCQRLRIPNPVRDLAKLVAEYHDLIHTVNKLRPETLLKLFNAIDVWRKPERLEQMIMTSEADARGRTGFENNPYPQGDYLRAAFQIANGVSIQEVVASGLQGLAIRDELQRRRQQALAEWKQTQETPLI</sequence>
<reference key="1">
    <citation type="journal article" date="2004" name="Proc. Natl. Acad. Sci. U.S.A.">
        <title>Insights into the evolution of Yersinia pestis through whole-genome comparison with Yersinia pseudotuberculosis.</title>
        <authorList>
            <person name="Chain P.S.G."/>
            <person name="Carniel E."/>
            <person name="Larimer F.W."/>
            <person name="Lamerdin J."/>
            <person name="Stoutland P.O."/>
            <person name="Regala W.M."/>
            <person name="Georgescu A.M."/>
            <person name="Vergez L.M."/>
            <person name="Land M.L."/>
            <person name="Motin V.L."/>
            <person name="Brubaker R.R."/>
            <person name="Fowler J."/>
            <person name="Hinnebusch J."/>
            <person name="Marceau M."/>
            <person name="Medigue C."/>
            <person name="Simonet M."/>
            <person name="Chenal-Francisque V."/>
            <person name="Souza B."/>
            <person name="Dacheux D."/>
            <person name="Elliott J.M."/>
            <person name="Derbise A."/>
            <person name="Hauser L.J."/>
            <person name="Garcia E."/>
        </authorList>
    </citation>
    <scope>NUCLEOTIDE SEQUENCE [LARGE SCALE GENOMIC DNA]</scope>
    <source>
        <strain>IP32953</strain>
    </source>
</reference>
<gene>
    <name evidence="1" type="primary">cca</name>
    <name type="ordered locus">YPTB3411</name>
</gene>
<proteinExistence type="inferred from homology"/>
<keyword id="KW-0067">ATP-binding</keyword>
<keyword id="KW-0378">Hydrolase</keyword>
<keyword id="KW-0460">Magnesium</keyword>
<keyword id="KW-0479">Metal-binding</keyword>
<keyword id="KW-0511">Multifunctional enzyme</keyword>
<keyword id="KW-0533">Nickel</keyword>
<keyword id="KW-0547">Nucleotide-binding</keyword>
<keyword id="KW-0548">Nucleotidyltransferase</keyword>
<keyword id="KW-0692">RNA repair</keyword>
<keyword id="KW-0694">RNA-binding</keyword>
<keyword id="KW-0808">Transferase</keyword>
<keyword id="KW-0819">tRNA processing</keyword>
<protein>
    <recommendedName>
        <fullName evidence="1">Multifunctional CCA protein</fullName>
    </recommendedName>
    <domain>
        <recommendedName>
            <fullName evidence="1">CCA-adding enzyme</fullName>
            <ecNumber evidence="1">2.7.7.72</ecNumber>
        </recommendedName>
        <alternativeName>
            <fullName evidence="1">CCA tRNA nucleotidyltransferase</fullName>
        </alternativeName>
        <alternativeName>
            <fullName evidence="1">tRNA CCA-pyrophosphorylase</fullName>
        </alternativeName>
        <alternativeName>
            <fullName evidence="1">tRNA adenylyl-/cytidylyl-transferase</fullName>
        </alternativeName>
        <alternativeName>
            <fullName evidence="1">tRNA nucleotidyltransferase</fullName>
        </alternativeName>
        <alternativeName>
            <fullName evidence="1">tRNA-NT</fullName>
        </alternativeName>
    </domain>
    <domain>
        <recommendedName>
            <fullName evidence="1">2'-nucleotidase</fullName>
            <ecNumber evidence="1">3.1.3.-</ecNumber>
        </recommendedName>
    </domain>
    <domain>
        <recommendedName>
            <fullName evidence="1">2',3'-cyclic phosphodiesterase</fullName>
            <ecNumber evidence="1">3.1.4.-</ecNumber>
        </recommendedName>
    </domain>
    <domain>
        <recommendedName>
            <fullName evidence="1">Phosphatase</fullName>
            <ecNumber evidence="1">3.1.3.-</ecNumber>
        </recommendedName>
    </domain>
</protein>